<proteinExistence type="inferred from homology"/>
<name>SYFA_ACTPJ</name>
<evidence type="ECO:0000255" key="1">
    <source>
        <dbReference type="HAMAP-Rule" id="MF_00281"/>
    </source>
</evidence>
<dbReference type="EC" id="6.1.1.20" evidence="1"/>
<dbReference type="EMBL" id="CP000687">
    <property type="protein sequence ID" value="ABY69172.1"/>
    <property type="molecule type" value="Genomic_DNA"/>
</dbReference>
<dbReference type="RefSeq" id="WP_005600743.1">
    <property type="nucleotide sequence ID" value="NC_010278.1"/>
</dbReference>
<dbReference type="SMR" id="B0BUG7"/>
<dbReference type="KEGG" id="apj:APJL_0602"/>
<dbReference type="HOGENOM" id="CLU_025086_0_1_6"/>
<dbReference type="Proteomes" id="UP000008547">
    <property type="component" value="Chromosome"/>
</dbReference>
<dbReference type="GO" id="GO:0005737">
    <property type="term" value="C:cytoplasm"/>
    <property type="evidence" value="ECO:0007669"/>
    <property type="project" value="UniProtKB-SubCell"/>
</dbReference>
<dbReference type="GO" id="GO:0005524">
    <property type="term" value="F:ATP binding"/>
    <property type="evidence" value="ECO:0007669"/>
    <property type="project" value="UniProtKB-UniRule"/>
</dbReference>
<dbReference type="GO" id="GO:0000287">
    <property type="term" value="F:magnesium ion binding"/>
    <property type="evidence" value="ECO:0007669"/>
    <property type="project" value="UniProtKB-UniRule"/>
</dbReference>
<dbReference type="GO" id="GO:0004826">
    <property type="term" value="F:phenylalanine-tRNA ligase activity"/>
    <property type="evidence" value="ECO:0007669"/>
    <property type="project" value="UniProtKB-UniRule"/>
</dbReference>
<dbReference type="GO" id="GO:0000049">
    <property type="term" value="F:tRNA binding"/>
    <property type="evidence" value="ECO:0007669"/>
    <property type="project" value="InterPro"/>
</dbReference>
<dbReference type="GO" id="GO:0006432">
    <property type="term" value="P:phenylalanyl-tRNA aminoacylation"/>
    <property type="evidence" value="ECO:0007669"/>
    <property type="project" value="UniProtKB-UniRule"/>
</dbReference>
<dbReference type="CDD" id="cd00496">
    <property type="entry name" value="PheRS_alpha_core"/>
    <property type="match status" value="1"/>
</dbReference>
<dbReference type="FunFam" id="3.30.930.10:FF:000003">
    <property type="entry name" value="Phenylalanine--tRNA ligase alpha subunit"/>
    <property type="match status" value="1"/>
</dbReference>
<dbReference type="Gene3D" id="3.30.930.10">
    <property type="entry name" value="Bira Bifunctional Protein, Domain 2"/>
    <property type="match status" value="1"/>
</dbReference>
<dbReference type="HAMAP" id="MF_00281">
    <property type="entry name" value="Phe_tRNA_synth_alpha1"/>
    <property type="match status" value="1"/>
</dbReference>
<dbReference type="InterPro" id="IPR006195">
    <property type="entry name" value="aa-tRNA-synth_II"/>
</dbReference>
<dbReference type="InterPro" id="IPR045864">
    <property type="entry name" value="aa-tRNA-synth_II/BPL/LPL"/>
</dbReference>
<dbReference type="InterPro" id="IPR004529">
    <property type="entry name" value="Phe-tRNA-synth_IIc_asu"/>
</dbReference>
<dbReference type="InterPro" id="IPR004188">
    <property type="entry name" value="Phe-tRNA_ligase_II_N"/>
</dbReference>
<dbReference type="InterPro" id="IPR022911">
    <property type="entry name" value="Phe_tRNA_ligase_alpha1_bac"/>
</dbReference>
<dbReference type="InterPro" id="IPR002319">
    <property type="entry name" value="Phenylalanyl-tRNA_Synthase"/>
</dbReference>
<dbReference type="InterPro" id="IPR010978">
    <property type="entry name" value="tRNA-bd_arm"/>
</dbReference>
<dbReference type="NCBIfam" id="TIGR00468">
    <property type="entry name" value="pheS"/>
    <property type="match status" value="1"/>
</dbReference>
<dbReference type="PANTHER" id="PTHR11538:SF41">
    <property type="entry name" value="PHENYLALANINE--TRNA LIGASE, MITOCHONDRIAL"/>
    <property type="match status" value="1"/>
</dbReference>
<dbReference type="PANTHER" id="PTHR11538">
    <property type="entry name" value="PHENYLALANYL-TRNA SYNTHETASE"/>
    <property type="match status" value="1"/>
</dbReference>
<dbReference type="Pfam" id="PF02912">
    <property type="entry name" value="Phe_tRNA-synt_N"/>
    <property type="match status" value="1"/>
</dbReference>
<dbReference type="Pfam" id="PF01409">
    <property type="entry name" value="tRNA-synt_2d"/>
    <property type="match status" value="1"/>
</dbReference>
<dbReference type="SUPFAM" id="SSF55681">
    <property type="entry name" value="Class II aaRS and biotin synthetases"/>
    <property type="match status" value="1"/>
</dbReference>
<dbReference type="SUPFAM" id="SSF46589">
    <property type="entry name" value="tRNA-binding arm"/>
    <property type="match status" value="1"/>
</dbReference>
<dbReference type="PROSITE" id="PS50862">
    <property type="entry name" value="AA_TRNA_LIGASE_II"/>
    <property type="match status" value="1"/>
</dbReference>
<keyword id="KW-0030">Aminoacyl-tRNA synthetase</keyword>
<keyword id="KW-0067">ATP-binding</keyword>
<keyword id="KW-0963">Cytoplasm</keyword>
<keyword id="KW-0436">Ligase</keyword>
<keyword id="KW-0460">Magnesium</keyword>
<keyword id="KW-0479">Metal-binding</keyword>
<keyword id="KW-0547">Nucleotide-binding</keyword>
<keyword id="KW-0648">Protein biosynthesis</keyword>
<gene>
    <name evidence="1" type="primary">pheS</name>
    <name type="ordered locus">APJL_0602</name>
</gene>
<accession>B0BUG7</accession>
<reference key="1">
    <citation type="journal article" date="2008" name="PLoS ONE">
        <title>Genome biology of Actinobacillus pleuropneumoniae JL03, an isolate of serotype 3 prevalent in China.</title>
        <authorList>
            <person name="Xu Z."/>
            <person name="Zhou Y."/>
            <person name="Li L."/>
            <person name="Zhou R."/>
            <person name="Xiao S."/>
            <person name="Wan Y."/>
            <person name="Zhang S."/>
            <person name="Wang K."/>
            <person name="Li W."/>
            <person name="Li L."/>
            <person name="Jin H."/>
            <person name="Kang M."/>
            <person name="Dalai B."/>
            <person name="Li T."/>
            <person name="Liu L."/>
            <person name="Cheng Y."/>
            <person name="Zhang L."/>
            <person name="Xu T."/>
            <person name="Zheng H."/>
            <person name="Pu S."/>
            <person name="Wang B."/>
            <person name="Gu W."/>
            <person name="Zhang X.L."/>
            <person name="Zhu G.-F."/>
            <person name="Wang S."/>
            <person name="Zhao G.-P."/>
            <person name="Chen H."/>
        </authorList>
    </citation>
    <scope>NUCLEOTIDE SEQUENCE [LARGE SCALE GENOMIC DNA]</scope>
    <source>
        <strain>JL03</strain>
    </source>
</reference>
<protein>
    <recommendedName>
        <fullName evidence="1">Phenylalanine--tRNA ligase alpha subunit</fullName>
        <ecNumber evidence="1">6.1.1.20</ecNumber>
    </recommendedName>
    <alternativeName>
        <fullName evidence="1">Phenylalanyl-tRNA synthetase alpha subunit</fullName>
        <shortName evidence="1">PheRS</shortName>
    </alternativeName>
</protein>
<feature type="chain" id="PRO_1000114843" description="Phenylalanine--tRNA ligase alpha subunit">
    <location>
        <begin position="1"/>
        <end position="328"/>
    </location>
</feature>
<feature type="binding site" evidence="1">
    <location>
        <position position="253"/>
    </location>
    <ligand>
        <name>Mg(2+)</name>
        <dbReference type="ChEBI" id="CHEBI:18420"/>
        <note>shared with beta subunit</note>
    </ligand>
</feature>
<comment type="catalytic activity">
    <reaction evidence="1">
        <text>tRNA(Phe) + L-phenylalanine + ATP = L-phenylalanyl-tRNA(Phe) + AMP + diphosphate + H(+)</text>
        <dbReference type="Rhea" id="RHEA:19413"/>
        <dbReference type="Rhea" id="RHEA-COMP:9668"/>
        <dbReference type="Rhea" id="RHEA-COMP:9699"/>
        <dbReference type="ChEBI" id="CHEBI:15378"/>
        <dbReference type="ChEBI" id="CHEBI:30616"/>
        <dbReference type="ChEBI" id="CHEBI:33019"/>
        <dbReference type="ChEBI" id="CHEBI:58095"/>
        <dbReference type="ChEBI" id="CHEBI:78442"/>
        <dbReference type="ChEBI" id="CHEBI:78531"/>
        <dbReference type="ChEBI" id="CHEBI:456215"/>
        <dbReference type="EC" id="6.1.1.20"/>
    </reaction>
</comment>
<comment type="cofactor">
    <cofactor evidence="1">
        <name>Mg(2+)</name>
        <dbReference type="ChEBI" id="CHEBI:18420"/>
    </cofactor>
    <text evidence="1">Binds 2 magnesium ions per tetramer.</text>
</comment>
<comment type="subunit">
    <text evidence="1">Tetramer of two alpha and two beta subunits.</text>
</comment>
<comment type="subcellular location">
    <subcellularLocation>
        <location evidence="1">Cytoplasm</location>
    </subcellularLocation>
</comment>
<comment type="similarity">
    <text evidence="1">Belongs to the class-II aminoacyl-tRNA synthetase family. Phe-tRNA synthetase alpha subunit type 1 subfamily.</text>
</comment>
<sequence length="328" mass="37611">MQHLKELTEKARSALDALDQGLDALEEFRVEYFGKKGHFTALMQELRNVAAEERPAIGAKINEAKQTILDILNAKKEAWEQEALNAKLAAESIDVSLPGRKTELGGLHPVSITIERVVKFFSELGFTVASGPEIETDYYNFDALNIPAHHPARADHDTFWFDAQRLLRTQTSGVQIRTMENMQPPIRIVAPGRVYRNDYDQTHTPMFHQIELLYVDKKANFTELKGLIHDFLKAFFEEDLQVRFRPSFFPFTEPSAEVDVMRQNGKWLEVLGCGMVHPNVLRNVGIDPEEYSGFAVGMGVERLTMLRYNVTDLRSFFENDLRFLKQFK</sequence>
<organism>
    <name type="scientific">Actinobacillus pleuropneumoniae serotype 3 (strain JL03)</name>
    <dbReference type="NCBI Taxonomy" id="434271"/>
    <lineage>
        <taxon>Bacteria</taxon>
        <taxon>Pseudomonadati</taxon>
        <taxon>Pseudomonadota</taxon>
        <taxon>Gammaproteobacteria</taxon>
        <taxon>Pasteurellales</taxon>
        <taxon>Pasteurellaceae</taxon>
        <taxon>Actinobacillus</taxon>
    </lineage>
</organism>